<sequence length="357" mass="38242">MNAPTVLIMAGGTGGHIMPGLAVADVLRERGWRVLWLGNPDKMEGRLVPPRGIDLVPMHFQGVRGRGVAAMLKLPFLLLRACSQAWGHLTRVRPDVVLGMGGYVAFPGGMMAALRGLPLVVHEQNAVAGTANRWLARLARRVLSGFPDVLPRGEVLGNPVRRDVCALPGPADRYAGRTGPLRMLVVGGSLGAHALNTTLPRALALIDPQARPQVIHQAGAQHQQSLREAYAQAGVPADCRDFIEDMADAMGQADLLVCRAGAMTVAEVAAAGVAALFVPFPHAIDDHQTANARFLSDAQAAWLCPQGELTPEWLADWLRQRTRPELLAVAERARQHARPQAAADIADVCEQAARRPS</sequence>
<evidence type="ECO:0000255" key="1">
    <source>
        <dbReference type="HAMAP-Rule" id="MF_00033"/>
    </source>
</evidence>
<accession>A9I4V2</accession>
<protein>
    <recommendedName>
        <fullName evidence="1">UDP-N-acetylglucosamine--N-acetylmuramyl-(pentapeptide) pyrophosphoryl-undecaprenol N-acetylglucosamine transferase</fullName>
        <ecNumber evidence="1">2.4.1.227</ecNumber>
    </recommendedName>
    <alternativeName>
        <fullName evidence="1">Undecaprenyl-PP-MurNAc-pentapeptide-UDPGlcNAc GlcNAc transferase</fullName>
    </alternativeName>
</protein>
<reference key="1">
    <citation type="journal article" date="2008" name="BMC Genomics">
        <title>The missing link: Bordetella petrii is endowed with both the metabolic versatility of environmental bacteria and virulence traits of pathogenic Bordetellae.</title>
        <authorList>
            <person name="Gross R."/>
            <person name="Guzman C.A."/>
            <person name="Sebaihia M."/>
            <person name="Martin dos Santos V.A.P."/>
            <person name="Pieper D.H."/>
            <person name="Koebnik R."/>
            <person name="Lechner M."/>
            <person name="Bartels D."/>
            <person name="Buhrmester J."/>
            <person name="Choudhuri J.V."/>
            <person name="Ebensen T."/>
            <person name="Gaigalat L."/>
            <person name="Herrmann S."/>
            <person name="Khachane A.N."/>
            <person name="Larisch C."/>
            <person name="Link S."/>
            <person name="Linke B."/>
            <person name="Meyer F."/>
            <person name="Mormann S."/>
            <person name="Nakunst D."/>
            <person name="Rueckert C."/>
            <person name="Schneiker-Bekel S."/>
            <person name="Schulze K."/>
            <person name="Voerholter F.-J."/>
            <person name="Yevsa T."/>
            <person name="Engle J.T."/>
            <person name="Goldman W.E."/>
            <person name="Puehler A."/>
            <person name="Goebel U.B."/>
            <person name="Goesmann A."/>
            <person name="Bloecker H."/>
            <person name="Kaiser O."/>
            <person name="Martinez-Arias R."/>
        </authorList>
    </citation>
    <scope>NUCLEOTIDE SEQUENCE [LARGE SCALE GENOMIC DNA]</scope>
    <source>
        <strain>ATCC BAA-461 / DSM 12804 / CCUG 43448</strain>
    </source>
</reference>
<gene>
    <name evidence="1" type="primary">murG</name>
    <name type="ordered locus">Bpet0697</name>
</gene>
<proteinExistence type="inferred from homology"/>
<name>MURG_BORPD</name>
<dbReference type="EC" id="2.4.1.227" evidence="1"/>
<dbReference type="EMBL" id="AM902716">
    <property type="protein sequence ID" value="CAP41029.1"/>
    <property type="molecule type" value="Genomic_DNA"/>
</dbReference>
<dbReference type="SMR" id="A9I4V2"/>
<dbReference type="STRING" id="94624.Bpet0697"/>
<dbReference type="KEGG" id="bpt:Bpet0697"/>
<dbReference type="eggNOG" id="COG0707">
    <property type="taxonomic scope" value="Bacteria"/>
</dbReference>
<dbReference type="UniPathway" id="UPA00219"/>
<dbReference type="Proteomes" id="UP000001225">
    <property type="component" value="Chromosome"/>
</dbReference>
<dbReference type="GO" id="GO:0005886">
    <property type="term" value="C:plasma membrane"/>
    <property type="evidence" value="ECO:0007669"/>
    <property type="project" value="UniProtKB-SubCell"/>
</dbReference>
<dbReference type="GO" id="GO:0051991">
    <property type="term" value="F:UDP-N-acetyl-D-glucosamine:N-acetylmuramoyl-L-alanyl-D-glutamyl-meso-2,6-diaminopimelyl-D-alanyl-D-alanine-diphosphoundecaprenol 4-beta-N-acetylglucosaminlytransferase activity"/>
    <property type="evidence" value="ECO:0007669"/>
    <property type="project" value="RHEA"/>
</dbReference>
<dbReference type="GO" id="GO:0050511">
    <property type="term" value="F:undecaprenyldiphospho-muramoylpentapeptide beta-N-acetylglucosaminyltransferase activity"/>
    <property type="evidence" value="ECO:0007669"/>
    <property type="project" value="UniProtKB-UniRule"/>
</dbReference>
<dbReference type="GO" id="GO:0005975">
    <property type="term" value="P:carbohydrate metabolic process"/>
    <property type="evidence" value="ECO:0007669"/>
    <property type="project" value="InterPro"/>
</dbReference>
<dbReference type="GO" id="GO:0051301">
    <property type="term" value="P:cell division"/>
    <property type="evidence" value="ECO:0007669"/>
    <property type="project" value="UniProtKB-KW"/>
</dbReference>
<dbReference type="GO" id="GO:0071555">
    <property type="term" value="P:cell wall organization"/>
    <property type="evidence" value="ECO:0007669"/>
    <property type="project" value="UniProtKB-KW"/>
</dbReference>
<dbReference type="GO" id="GO:0030259">
    <property type="term" value="P:lipid glycosylation"/>
    <property type="evidence" value="ECO:0007669"/>
    <property type="project" value="UniProtKB-UniRule"/>
</dbReference>
<dbReference type="GO" id="GO:0009252">
    <property type="term" value="P:peptidoglycan biosynthetic process"/>
    <property type="evidence" value="ECO:0007669"/>
    <property type="project" value="UniProtKB-UniRule"/>
</dbReference>
<dbReference type="GO" id="GO:0008360">
    <property type="term" value="P:regulation of cell shape"/>
    <property type="evidence" value="ECO:0007669"/>
    <property type="project" value="UniProtKB-KW"/>
</dbReference>
<dbReference type="CDD" id="cd03785">
    <property type="entry name" value="GT28_MurG"/>
    <property type="match status" value="1"/>
</dbReference>
<dbReference type="Gene3D" id="3.40.50.2000">
    <property type="entry name" value="Glycogen Phosphorylase B"/>
    <property type="match status" value="2"/>
</dbReference>
<dbReference type="HAMAP" id="MF_00033">
    <property type="entry name" value="MurG"/>
    <property type="match status" value="1"/>
</dbReference>
<dbReference type="InterPro" id="IPR006009">
    <property type="entry name" value="GlcNAc_MurG"/>
</dbReference>
<dbReference type="InterPro" id="IPR007235">
    <property type="entry name" value="Glyco_trans_28_C"/>
</dbReference>
<dbReference type="InterPro" id="IPR004276">
    <property type="entry name" value="GlycoTrans_28_N"/>
</dbReference>
<dbReference type="NCBIfam" id="TIGR01133">
    <property type="entry name" value="murG"/>
    <property type="match status" value="1"/>
</dbReference>
<dbReference type="PANTHER" id="PTHR21015:SF22">
    <property type="entry name" value="GLYCOSYLTRANSFERASE"/>
    <property type="match status" value="1"/>
</dbReference>
<dbReference type="PANTHER" id="PTHR21015">
    <property type="entry name" value="UDP-N-ACETYLGLUCOSAMINE--N-ACETYLMURAMYL-(PENTAPEPTIDE) PYROPHOSPHORYL-UNDECAPRENOL N-ACETYLGLUCOSAMINE TRANSFERASE 1"/>
    <property type="match status" value="1"/>
</dbReference>
<dbReference type="Pfam" id="PF04101">
    <property type="entry name" value="Glyco_tran_28_C"/>
    <property type="match status" value="1"/>
</dbReference>
<dbReference type="Pfam" id="PF03033">
    <property type="entry name" value="Glyco_transf_28"/>
    <property type="match status" value="1"/>
</dbReference>
<dbReference type="SUPFAM" id="SSF53756">
    <property type="entry name" value="UDP-Glycosyltransferase/glycogen phosphorylase"/>
    <property type="match status" value="1"/>
</dbReference>
<feature type="chain" id="PRO_1000090407" description="UDP-N-acetylglucosamine--N-acetylmuramyl-(pentapeptide) pyrophosphoryl-undecaprenol N-acetylglucosamine transferase">
    <location>
        <begin position="1"/>
        <end position="357"/>
    </location>
</feature>
<feature type="binding site" evidence="1">
    <location>
        <begin position="13"/>
        <end position="15"/>
    </location>
    <ligand>
        <name>UDP-N-acetyl-alpha-D-glucosamine</name>
        <dbReference type="ChEBI" id="CHEBI:57705"/>
    </ligand>
</feature>
<feature type="binding site" evidence="1">
    <location>
        <position position="125"/>
    </location>
    <ligand>
        <name>UDP-N-acetyl-alpha-D-glucosamine</name>
        <dbReference type="ChEBI" id="CHEBI:57705"/>
    </ligand>
</feature>
<feature type="binding site" evidence="1">
    <location>
        <position position="161"/>
    </location>
    <ligand>
        <name>UDP-N-acetyl-alpha-D-glucosamine</name>
        <dbReference type="ChEBI" id="CHEBI:57705"/>
    </ligand>
</feature>
<feature type="binding site" evidence="1">
    <location>
        <position position="189"/>
    </location>
    <ligand>
        <name>UDP-N-acetyl-alpha-D-glucosamine</name>
        <dbReference type="ChEBI" id="CHEBI:57705"/>
    </ligand>
</feature>
<feature type="binding site" evidence="1">
    <location>
        <position position="243"/>
    </location>
    <ligand>
        <name>UDP-N-acetyl-alpha-D-glucosamine</name>
        <dbReference type="ChEBI" id="CHEBI:57705"/>
    </ligand>
</feature>
<feature type="binding site" evidence="1">
    <location>
        <position position="288"/>
    </location>
    <ligand>
        <name>UDP-N-acetyl-alpha-D-glucosamine</name>
        <dbReference type="ChEBI" id="CHEBI:57705"/>
    </ligand>
</feature>
<organism>
    <name type="scientific">Bordetella petrii (strain ATCC BAA-461 / DSM 12804 / CCUG 43448)</name>
    <dbReference type="NCBI Taxonomy" id="340100"/>
    <lineage>
        <taxon>Bacteria</taxon>
        <taxon>Pseudomonadati</taxon>
        <taxon>Pseudomonadota</taxon>
        <taxon>Betaproteobacteria</taxon>
        <taxon>Burkholderiales</taxon>
        <taxon>Alcaligenaceae</taxon>
        <taxon>Bordetella</taxon>
    </lineage>
</organism>
<keyword id="KW-0131">Cell cycle</keyword>
<keyword id="KW-0132">Cell division</keyword>
<keyword id="KW-0997">Cell inner membrane</keyword>
<keyword id="KW-1003">Cell membrane</keyword>
<keyword id="KW-0133">Cell shape</keyword>
<keyword id="KW-0961">Cell wall biogenesis/degradation</keyword>
<keyword id="KW-0328">Glycosyltransferase</keyword>
<keyword id="KW-0472">Membrane</keyword>
<keyword id="KW-0573">Peptidoglycan synthesis</keyword>
<keyword id="KW-0808">Transferase</keyword>
<comment type="function">
    <text evidence="1">Cell wall formation. Catalyzes the transfer of a GlcNAc subunit on undecaprenyl-pyrophosphoryl-MurNAc-pentapeptide (lipid intermediate I) to form undecaprenyl-pyrophosphoryl-MurNAc-(pentapeptide)GlcNAc (lipid intermediate II).</text>
</comment>
<comment type="catalytic activity">
    <reaction evidence="1">
        <text>di-trans,octa-cis-undecaprenyl diphospho-N-acetyl-alpha-D-muramoyl-L-alanyl-D-glutamyl-meso-2,6-diaminopimeloyl-D-alanyl-D-alanine + UDP-N-acetyl-alpha-D-glucosamine = di-trans,octa-cis-undecaprenyl diphospho-[N-acetyl-alpha-D-glucosaminyl-(1-&gt;4)]-N-acetyl-alpha-D-muramoyl-L-alanyl-D-glutamyl-meso-2,6-diaminopimeloyl-D-alanyl-D-alanine + UDP + H(+)</text>
        <dbReference type="Rhea" id="RHEA:31227"/>
        <dbReference type="ChEBI" id="CHEBI:15378"/>
        <dbReference type="ChEBI" id="CHEBI:57705"/>
        <dbReference type="ChEBI" id="CHEBI:58223"/>
        <dbReference type="ChEBI" id="CHEBI:61387"/>
        <dbReference type="ChEBI" id="CHEBI:61388"/>
        <dbReference type="EC" id="2.4.1.227"/>
    </reaction>
</comment>
<comment type="pathway">
    <text evidence="1">Cell wall biogenesis; peptidoglycan biosynthesis.</text>
</comment>
<comment type="subcellular location">
    <subcellularLocation>
        <location evidence="1">Cell inner membrane</location>
        <topology evidence="1">Peripheral membrane protein</topology>
        <orientation evidence="1">Cytoplasmic side</orientation>
    </subcellularLocation>
</comment>
<comment type="similarity">
    <text evidence="1">Belongs to the glycosyltransferase 28 family. MurG subfamily.</text>
</comment>